<gene>
    <name type="primary">fpr2</name>
    <name type="ORF">AFUA_2G03870</name>
</gene>
<protein>
    <recommendedName>
        <fullName>FK506-binding protein 2</fullName>
        <ecNumber>5.2.1.8</ecNumber>
    </recommendedName>
    <alternativeName>
        <fullName>Peptidyl-prolyl cis-trans isomerase</fullName>
        <shortName>PPIase</shortName>
    </alternativeName>
    <alternativeName>
        <fullName>Rotamase</fullName>
    </alternativeName>
</protein>
<keyword id="KW-0256">Endoplasmic reticulum</keyword>
<keyword id="KW-0413">Isomerase</keyword>
<keyword id="KW-1185">Reference proteome</keyword>
<keyword id="KW-0697">Rotamase</keyword>
<keyword id="KW-0732">Signal</keyword>
<accession>Q4WHX4</accession>
<reference key="1">
    <citation type="journal article" date="2005" name="Nature">
        <title>Genomic sequence of the pathogenic and allergenic filamentous fungus Aspergillus fumigatus.</title>
        <authorList>
            <person name="Nierman W.C."/>
            <person name="Pain A."/>
            <person name="Anderson M.J."/>
            <person name="Wortman J.R."/>
            <person name="Kim H.S."/>
            <person name="Arroyo J."/>
            <person name="Berriman M."/>
            <person name="Abe K."/>
            <person name="Archer D.B."/>
            <person name="Bermejo C."/>
            <person name="Bennett J.W."/>
            <person name="Bowyer P."/>
            <person name="Chen D."/>
            <person name="Collins M."/>
            <person name="Coulsen R."/>
            <person name="Davies R."/>
            <person name="Dyer P.S."/>
            <person name="Farman M.L."/>
            <person name="Fedorova N."/>
            <person name="Fedorova N.D."/>
            <person name="Feldblyum T.V."/>
            <person name="Fischer R."/>
            <person name="Fosker N."/>
            <person name="Fraser A."/>
            <person name="Garcia J.L."/>
            <person name="Garcia M.J."/>
            <person name="Goble A."/>
            <person name="Goldman G.H."/>
            <person name="Gomi K."/>
            <person name="Griffith-Jones S."/>
            <person name="Gwilliam R."/>
            <person name="Haas B.J."/>
            <person name="Haas H."/>
            <person name="Harris D.E."/>
            <person name="Horiuchi H."/>
            <person name="Huang J."/>
            <person name="Humphray S."/>
            <person name="Jimenez J."/>
            <person name="Keller N."/>
            <person name="Khouri H."/>
            <person name="Kitamoto K."/>
            <person name="Kobayashi T."/>
            <person name="Konzack S."/>
            <person name="Kulkarni R."/>
            <person name="Kumagai T."/>
            <person name="Lafton A."/>
            <person name="Latge J.-P."/>
            <person name="Li W."/>
            <person name="Lord A."/>
            <person name="Lu C."/>
            <person name="Majoros W.H."/>
            <person name="May G.S."/>
            <person name="Miller B.L."/>
            <person name="Mohamoud Y."/>
            <person name="Molina M."/>
            <person name="Monod M."/>
            <person name="Mouyna I."/>
            <person name="Mulligan S."/>
            <person name="Murphy L.D."/>
            <person name="O'Neil S."/>
            <person name="Paulsen I."/>
            <person name="Penalva M.A."/>
            <person name="Pertea M."/>
            <person name="Price C."/>
            <person name="Pritchard B.L."/>
            <person name="Quail M.A."/>
            <person name="Rabbinowitsch E."/>
            <person name="Rawlins N."/>
            <person name="Rajandream M.A."/>
            <person name="Reichard U."/>
            <person name="Renauld H."/>
            <person name="Robson G.D."/>
            <person name="Rodriguez de Cordoba S."/>
            <person name="Rodriguez-Pena J.M."/>
            <person name="Ronning C.M."/>
            <person name="Rutter S."/>
            <person name="Salzberg S.L."/>
            <person name="Sanchez M."/>
            <person name="Sanchez-Ferrero J.C."/>
            <person name="Saunders D."/>
            <person name="Seeger K."/>
            <person name="Squares R."/>
            <person name="Squares S."/>
            <person name="Takeuchi M."/>
            <person name="Tekaia F."/>
            <person name="Turner G."/>
            <person name="Vazquez de Aldana C.R."/>
            <person name="Weidman J."/>
            <person name="White O."/>
            <person name="Woodward J.R."/>
            <person name="Yu J.-H."/>
            <person name="Fraser C.M."/>
            <person name="Galagan J.E."/>
            <person name="Asai K."/>
            <person name="Machida M."/>
            <person name="Hall N."/>
            <person name="Barrell B.G."/>
            <person name="Denning D.W."/>
        </authorList>
    </citation>
    <scope>NUCLEOTIDE SEQUENCE [LARGE SCALE GENOMIC DNA]</scope>
    <source>
        <strain>ATCC MYA-4609 / CBS 101355 / FGSC A1100 / Af293</strain>
    </source>
</reference>
<comment type="function">
    <text evidence="1">PPIases accelerate the folding of proteins. It catalyzes the cis-trans isomerization of proline imidic peptide bonds in oligopeptides (By similarity).</text>
</comment>
<comment type="catalytic activity">
    <reaction>
        <text>[protein]-peptidylproline (omega=180) = [protein]-peptidylproline (omega=0)</text>
        <dbReference type="Rhea" id="RHEA:16237"/>
        <dbReference type="Rhea" id="RHEA-COMP:10747"/>
        <dbReference type="Rhea" id="RHEA-COMP:10748"/>
        <dbReference type="ChEBI" id="CHEBI:83833"/>
        <dbReference type="ChEBI" id="CHEBI:83834"/>
        <dbReference type="EC" id="5.2.1.8"/>
    </reaction>
</comment>
<comment type="activity regulation">
    <text evidence="1">Inhibited by both FK506 and rapamycin.</text>
</comment>
<comment type="subcellular location">
    <subcellularLocation>
        <location evidence="1">Endoplasmic reticulum</location>
    </subcellularLocation>
</comment>
<comment type="similarity">
    <text evidence="4">Belongs to the FKBP-type PPIase family. FKBP2 subfamily.</text>
</comment>
<organism>
    <name type="scientific">Aspergillus fumigatus (strain ATCC MYA-4609 / CBS 101355 / FGSC A1100 / Af293)</name>
    <name type="common">Neosartorya fumigata</name>
    <dbReference type="NCBI Taxonomy" id="330879"/>
    <lineage>
        <taxon>Eukaryota</taxon>
        <taxon>Fungi</taxon>
        <taxon>Dikarya</taxon>
        <taxon>Ascomycota</taxon>
        <taxon>Pezizomycotina</taxon>
        <taxon>Eurotiomycetes</taxon>
        <taxon>Eurotiomycetidae</taxon>
        <taxon>Eurotiales</taxon>
        <taxon>Aspergillaceae</taxon>
        <taxon>Aspergillus</taxon>
        <taxon>Aspergillus subgen. Fumigati</taxon>
    </lineage>
</organism>
<evidence type="ECO:0000250" key="1"/>
<evidence type="ECO:0000255" key="2"/>
<evidence type="ECO:0000255" key="3">
    <source>
        <dbReference type="PROSITE-ProRule" id="PRU00277"/>
    </source>
</evidence>
<evidence type="ECO:0000305" key="4"/>
<sequence>MRILLLSALFLSLTTLVLSADLGIEKTHVVECNRKTTKGDTVHMHYRGTLAADGSEFDSSYGRNQPLKFKLGAGRVIKGWDEGLLDMCVGEKRTLTIPPEYGYGERGIGPIPGGATLIFETELVQIEGVNNDEL</sequence>
<name>FKBP2_ASPFU</name>
<feature type="signal peptide" evidence="2">
    <location>
        <begin position="1"/>
        <end position="19"/>
    </location>
</feature>
<feature type="chain" id="PRO_0000233063" description="FK506-binding protein 2">
    <location>
        <begin position="20"/>
        <end position="134"/>
    </location>
</feature>
<feature type="domain" description="PPIase FKBP-type" evidence="3">
    <location>
        <begin position="39"/>
        <end position="127"/>
    </location>
</feature>
<feature type="short sequence motif" description="Prevents secretion from ER" evidence="2">
    <location>
        <begin position="131"/>
        <end position="134"/>
    </location>
</feature>
<proteinExistence type="inferred from homology"/>
<dbReference type="EC" id="5.2.1.8"/>
<dbReference type="EMBL" id="AAHF01000008">
    <property type="protein sequence ID" value="EAL87481.1"/>
    <property type="molecule type" value="Genomic_DNA"/>
</dbReference>
<dbReference type="RefSeq" id="XP_749519.1">
    <property type="nucleotide sequence ID" value="XM_744426.1"/>
</dbReference>
<dbReference type="SMR" id="Q4WHX4"/>
<dbReference type="FunCoup" id="Q4WHX4">
    <property type="interactions" value="550"/>
</dbReference>
<dbReference type="STRING" id="330879.Q4WHX4"/>
<dbReference type="EnsemblFungi" id="EAL87481">
    <property type="protein sequence ID" value="EAL87481"/>
    <property type="gene ID" value="AFUA_2G03870"/>
</dbReference>
<dbReference type="GeneID" id="3506809"/>
<dbReference type="KEGG" id="afm:AFUA_2G03870"/>
<dbReference type="VEuPathDB" id="FungiDB:Afu2g03870"/>
<dbReference type="eggNOG" id="KOG0549">
    <property type="taxonomic scope" value="Eukaryota"/>
</dbReference>
<dbReference type="HOGENOM" id="CLU_013615_8_1_1"/>
<dbReference type="InParanoid" id="Q4WHX4"/>
<dbReference type="OMA" id="VHMHYTG"/>
<dbReference type="OrthoDB" id="1902587at2759"/>
<dbReference type="Proteomes" id="UP000002530">
    <property type="component" value="Chromosome 2"/>
</dbReference>
<dbReference type="GO" id="GO:0005783">
    <property type="term" value="C:endoplasmic reticulum"/>
    <property type="evidence" value="ECO:0000318"/>
    <property type="project" value="GO_Central"/>
</dbReference>
<dbReference type="GO" id="GO:0003755">
    <property type="term" value="F:peptidyl-prolyl cis-trans isomerase activity"/>
    <property type="evidence" value="ECO:0000318"/>
    <property type="project" value="GO_Central"/>
</dbReference>
<dbReference type="GO" id="GO:0061077">
    <property type="term" value="P:chaperone-mediated protein folding"/>
    <property type="evidence" value="ECO:0007669"/>
    <property type="project" value="InterPro"/>
</dbReference>
<dbReference type="FunFam" id="3.10.50.40:FF:000006">
    <property type="entry name" value="Peptidyl-prolyl cis-trans isomerase"/>
    <property type="match status" value="1"/>
</dbReference>
<dbReference type="Gene3D" id="3.10.50.40">
    <property type="match status" value="1"/>
</dbReference>
<dbReference type="InterPro" id="IPR044609">
    <property type="entry name" value="FKBP2/11"/>
</dbReference>
<dbReference type="InterPro" id="IPR046357">
    <property type="entry name" value="PPIase_dom_sf"/>
</dbReference>
<dbReference type="InterPro" id="IPR001179">
    <property type="entry name" value="PPIase_FKBP_dom"/>
</dbReference>
<dbReference type="PANTHER" id="PTHR45779">
    <property type="entry name" value="PEPTIDYLPROLYL ISOMERASE"/>
    <property type="match status" value="1"/>
</dbReference>
<dbReference type="PANTHER" id="PTHR45779:SF7">
    <property type="entry name" value="PEPTIDYLPROLYL ISOMERASE"/>
    <property type="match status" value="1"/>
</dbReference>
<dbReference type="Pfam" id="PF00254">
    <property type="entry name" value="FKBP_C"/>
    <property type="match status" value="1"/>
</dbReference>
<dbReference type="SUPFAM" id="SSF54534">
    <property type="entry name" value="FKBP-like"/>
    <property type="match status" value="1"/>
</dbReference>
<dbReference type="PROSITE" id="PS50059">
    <property type="entry name" value="FKBP_PPIASE"/>
    <property type="match status" value="1"/>
</dbReference>